<evidence type="ECO:0000255" key="1">
    <source>
        <dbReference type="HAMAP-Rule" id="MF_01166"/>
    </source>
</evidence>
<evidence type="ECO:0000269" key="2">
    <source>
    </source>
</evidence>
<organism>
    <name type="scientific">Yersinia pseudotuberculosis serotype I (strain IP32953)</name>
    <dbReference type="NCBI Taxonomy" id="273123"/>
    <lineage>
        <taxon>Bacteria</taxon>
        <taxon>Pseudomonadati</taxon>
        <taxon>Pseudomonadota</taxon>
        <taxon>Gammaproteobacteria</taxon>
        <taxon>Enterobacterales</taxon>
        <taxon>Yersiniaceae</taxon>
        <taxon>Yersinia</taxon>
    </lineage>
</organism>
<feature type="chain" id="PRO_0000083113" description="Bifunctional polymyxin resistance protein ArnA">
    <location>
        <begin position="1"/>
        <end position="667"/>
    </location>
</feature>
<feature type="region of interest" description="Formyltransferase ArnAFT">
    <location>
        <begin position="1"/>
        <end position="304"/>
    </location>
</feature>
<feature type="region of interest" description="Dehydrogenase ArnADH">
    <location>
        <begin position="314"/>
        <end position="667"/>
    </location>
</feature>
<feature type="active site" description="Proton donor; for formyltransferase activity" evidence="1">
    <location>
        <position position="104"/>
    </location>
</feature>
<feature type="active site" description="Proton acceptor; for decarboxylase activity" evidence="1">
    <location>
        <position position="434"/>
    </location>
</feature>
<feature type="active site" description="Proton donor; for decarboxylase activity" evidence="1">
    <location>
        <position position="619"/>
    </location>
</feature>
<feature type="binding site" evidence="1">
    <location>
        <position position="114"/>
    </location>
    <ligand>
        <name>(6R)-10-formyltetrahydrofolate</name>
        <dbReference type="ChEBI" id="CHEBI:195366"/>
    </ligand>
</feature>
<feature type="binding site" evidence="1">
    <location>
        <begin position="136"/>
        <end position="140"/>
    </location>
    <ligand>
        <name>(6R)-10-formyltetrahydrofolate</name>
        <dbReference type="ChEBI" id="CHEBI:195366"/>
    </ligand>
</feature>
<feature type="binding site" evidence="1">
    <location>
        <position position="347"/>
    </location>
    <ligand>
        <name>NAD(+)</name>
        <dbReference type="ChEBI" id="CHEBI:57540"/>
    </ligand>
</feature>
<feature type="binding site" evidence="1">
    <location>
        <begin position="368"/>
        <end position="369"/>
    </location>
    <ligand>
        <name>NAD(+)</name>
        <dbReference type="ChEBI" id="CHEBI:57540"/>
    </ligand>
</feature>
<feature type="binding site" evidence="1">
    <location>
        <position position="393"/>
    </location>
    <ligand>
        <name>UDP-alpha-D-glucuronate</name>
        <dbReference type="ChEBI" id="CHEBI:58052"/>
    </ligand>
</feature>
<feature type="binding site" evidence="1">
    <location>
        <position position="398"/>
    </location>
    <ligand>
        <name>UDP-alpha-D-glucuronate</name>
        <dbReference type="ChEBI" id="CHEBI:58052"/>
    </ligand>
</feature>
<feature type="binding site" evidence="1">
    <location>
        <begin position="432"/>
        <end position="433"/>
    </location>
    <ligand>
        <name>UDP-alpha-D-glucuronate</name>
        <dbReference type="ChEBI" id="CHEBI:58052"/>
    </ligand>
</feature>
<feature type="binding site" evidence="1">
    <location>
        <position position="460"/>
    </location>
    <ligand>
        <name>UDP-alpha-D-glucuronate</name>
        <dbReference type="ChEBI" id="CHEBI:58052"/>
    </ligand>
</feature>
<feature type="binding site" evidence="1">
    <location>
        <position position="492"/>
    </location>
    <ligand>
        <name>UDP-alpha-D-glucuronate</name>
        <dbReference type="ChEBI" id="CHEBI:58052"/>
    </ligand>
</feature>
<feature type="binding site" evidence="1">
    <location>
        <begin position="526"/>
        <end position="535"/>
    </location>
    <ligand>
        <name>UDP-alpha-D-glucuronate</name>
        <dbReference type="ChEBI" id="CHEBI:58052"/>
    </ligand>
</feature>
<feature type="binding site" evidence="1">
    <location>
        <position position="613"/>
    </location>
    <ligand>
        <name>UDP-alpha-D-glucuronate</name>
        <dbReference type="ChEBI" id="CHEBI:58052"/>
    </ligand>
</feature>
<feature type="site" description="Transition state stabilizer" evidence="1">
    <location>
        <position position="102"/>
    </location>
</feature>
<feature type="site" description="Raises pKa of active site His" evidence="1">
    <location>
        <position position="140"/>
    </location>
</feature>
<reference key="1">
    <citation type="journal article" date="2004" name="Microbiology">
        <title>The pmrF polymyxin-resistance operon of Yersinia pseudotuberculosis is upregulated by the PhoP-PhoQ two-component system but not by PmrA-PmrB, and is not required for virulence.</title>
        <authorList>
            <person name="Marceau M.B."/>
            <person name="Sebbane F."/>
            <person name="Ewann F."/>
            <person name="Collyn F."/>
            <person name="Lindner B."/>
            <person name="Campos M.A."/>
            <person name="Bengoechea J.-A."/>
            <person name="Simonet M."/>
        </authorList>
    </citation>
    <scope>NUCLEOTIDE SEQUENCE [GENOMIC DNA]</scope>
    <scope>INDUCTION</scope>
    <source>
        <strain>32777 / IP2777 / Serotype O1:b</strain>
    </source>
</reference>
<reference key="2">
    <citation type="journal article" date="2004" name="Proc. Natl. Acad. Sci. U.S.A.">
        <title>Insights into the evolution of Yersinia pestis through whole-genome comparison with Yersinia pseudotuberculosis.</title>
        <authorList>
            <person name="Chain P.S.G."/>
            <person name="Carniel E."/>
            <person name="Larimer F.W."/>
            <person name="Lamerdin J."/>
            <person name="Stoutland P.O."/>
            <person name="Regala W.M."/>
            <person name="Georgescu A.M."/>
            <person name="Vergez L.M."/>
            <person name="Land M.L."/>
            <person name="Motin V.L."/>
            <person name="Brubaker R.R."/>
            <person name="Fowler J."/>
            <person name="Hinnebusch J."/>
            <person name="Marceau M."/>
            <person name="Medigue C."/>
            <person name="Simonet M."/>
            <person name="Chenal-Francisque V."/>
            <person name="Souza B."/>
            <person name="Dacheux D."/>
            <person name="Elliott J.M."/>
            <person name="Derbise A."/>
            <person name="Hauser L.J."/>
            <person name="Garcia E."/>
        </authorList>
    </citation>
    <scope>NUCLEOTIDE SEQUENCE [LARGE SCALE GENOMIC DNA]</scope>
    <source>
        <strain>IP32953</strain>
    </source>
</reference>
<sequence length="667" mass="74893">MKAIVFAYHDIGCVGLNALAEAGYDIQAVFTHTDNPGENRFFSSVARVAADLALPVFAPEDVNHPLWVERIRELQPDIIFSFYYRNMLSDEILSLAPQGGFNLHGSLLPQYRGRAPINWVLVNGETETGVTLHQMVKKADAGPIAGQYKVAISDVDTALTLHAKMRDAAQELLRNLLPRMKEGPLPLTPQKEADASYFGRRTAADGEIHWQKSAFTINNLVRAVTEPYPGAFSYLGQRKLTIWRSRPLDLVHNKLPGTVLSTAPLTVACGEGALEIITGQGEAGLYVQGDRLAQEMGIVTDVRLGNKPSNTLKRRTRVLILGVNGFIGNHLTERLLQDDRYEVYGLDIGSDAISRFLGNPAFHFVEGDISIHSEWIEYHIKKCDVILPLVAIATPIEYTRNPLRVFELDFEENLKIVRDCVKYNKRIVFPSTSEVYGMCDDKEFDEDTSRLIVGPINKQRWIYSVSKQLLDRVIWAYGVKEGLKFTLFRPFNWMGPRLDNLDAARIGSSRAITQLILNLVEGSPIKLVDGGAQKRCFTDIHDGIEALFRIIENRDGCCDGQIINIGNPTNEASIRELAEMLLTSFENHELRDHFPPFAGFKDIESSAYYGKGYQDVEYRTPSIKNARRILHWQPEIAMQQTVTETLDFFLRAAVIEKTAAPKDELNA</sequence>
<keyword id="KW-0046">Antibiotic resistance</keyword>
<keyword id="KW-0441">Lipid A biosynthesis</keyword>
<keyword id="KW-0444">Lipid biosynthesis</keyword>
<keyword id="KW-0443">Lipid metabolism</keyword>
<keyword id="KW-0448">Lipopolysaccharide biosynthesis</keyword>
<keyword id="KW-0511">Multifunctional enzyme</keyword>
<keyword id="KW-0520">NAD</keyword>
<keyword id="KW-0560">Oxidoreductase</keyword>
<keyword id="KW-0808">Transferase</keyword>
<protein>
    <recommendedName>
        <fullName evidence="1">Bifunctional polymyxin resistance protein ArnA</fullName>
    </recommendedName>
    <domain>
        <recommendedName>
            <fullName evidence="1">UDP-4-amino-4-deoxy-L-arabinose formyltransferase</fullName>
            <ecNumber evidence="1">2.1.2.13</ecNumber>
        </recommendedName>
        <alternativeName>
            <fullName evidence="1">ArnAFT</fullName>
        </alternativeName>
        <alternativeName>
            <fullName evidence="1">UDP-L-Ara4N formyltransferase</fullName>
        </alternativeName>
    </domain>
    <domain>
        <recommendedName>
            <fullName evidence="1">UDP-glucuronic acid oxidase, UDP-4-keto-hexauronic acid decarboxylating</fullName>
            <ecNumber evidence="1">1.1.1.305</ecNumber>
        </recommendedName>
        <alternativeName>
            <fullName evidence="1">ArnADH</fullName>
        </alternativeName>
        <alternativeName>
            <fullName evidence="1">UDP-GlcUA decarboxylase</fullName>
        </alternativeName>
        <alternativeName>
            <fullName evidence="1">UDP-glucuronic acid dehydrogenase</fullName>
        </alternativeName>
    </domain>
</protein>
<comment type="function">
    <text evidence="1">Bifunctional enzyme that catalyzes the oxidative decarboxylation of UDP-glucuronic acid (UDP-GlcUA) to UDP-4-keto-arabinose (UDP-Ara4O) and the addition of a formyl group to UDP-4-amino-4-deoxy-L-arabinose (UDP-L-Ara4N) to form UDP-L-4-formamido-arabinose (UDP-L-Ara4FN). The modified arabinose is attached to lipid A and is required for resistance to polymyxin and cationic antimicrobial peptides.</text>
</comment>
<comment type="catalytic activity">
    <reaction evidence="1">
        <text>UDP-alpha-D-glucuronate + NAD(+) = UDP-beta-L-threo-pentopyranos-4-ulose + CO2 + NADH</text>
        <dbReference type="Rhea" id="RHEA:24702"/>
        <dbReference type="ChEBI" id="CHEBI:16526"/>
        <dbReference type="ChEBI" id="CHEBI:57540"/>
        <dbReference type="ChEBI" id="CHEBI:57945"/>
        <dbReference type="ChEBI" id="CHEBI:58052"/>
        <dbReference type="ChEBI" id="CHEBI:58710"/>
        <dbReference type="EC" id="1.1.1.305"/>
    </reaction>
</comment>
<comment type="catalytic activity">
    <reaction evidence="1">
        <text>UDP-4-amino-4-deoxy-beta-L-arabinose + (6R)-10-formyltetrahydrofolate = UDP-4-deoxy-4-formamido-beta-L-arabinose + (6S)-5,6,7,8-tetrahydrofolate + H(+)</text>
        <dbReference type="Rhea" id="RHEA:24706"/>
        <dbReference type="ChEBI" id="CHEBI:15378"/>
        <dbReference type="ChEBI" id="CHEBI:57453"/>
        <dbReference type="ChEBI" id="CHEBI:58708"/>
        <dbReference type="ChEBI" id="CHEBI:58709"/>
        <dbReference type="ChEBI" id="CHEBI:195366"/>
        <dbReference type="EC" id="2.1.2.13"/>
    </reaction>
</comment>
<comment type="pathway">
    <text evidence="1">Nucleotide-sugar biosynthesis; UDP-4-deoxy-4-formamido-beta-L-arabinose biosynthesis; UDP-4-deoxy-4-formamido-beta-L-arabinose from UDP-alpha-D-glucuronate: step 1/3.</text>
</comment>
<comment type="pathway">
    <text evidence="1">Nucleotide-sugar biosynthesis; UDP-4-deoxy-4-formamido-beta-L-arabinose biosynthesis; UDP-4-deoxy-4-formamido-beta-L-arabinose from UDP-alpha-D-glucuronate: step 3/3.</text>
</comment>
<comment type="pathway">
    <text evidence="1">Bacterial outer membrane biogenesis; lipopolysaccharide biosynthesis.</text>
</comment>
<comment type="subunit">
    <text evidence="1">Homohexamer, formed by a dimer of trimers.</text>
</comment>
<comment type="induction">
    <text evidence="2">Activated by low magnesium concentrations, via the two-component regulatory system PhoP/PhoQ.</text>
</comment>
<comment type="similarity">
    <text evidence="1">In the N-terminal section; belongs to the Fmt family. UDP-L-Ara4N formyltransferase subfamily.</text>
</comment>
<comment type="similarity">
    <text evidence="1">In the C-terminal section; belongs to the NAD(P)-dependent epimerase/dehydratase family. UDP-glucuronic acid decarboxylase subfamily.</text>
</comment>
<accession>Q93PD8</accession>
<accession>Q66A04</accession>
<gene>
    <name evidence="1" type="primary">arnA</name>
    <name type="ordered locus">YPTB2328</name>
</gene>
<proteinExistence type="evidence at transcript level"/>
<dbReference type="EC" id="2.1.2.13" evidence="1"/>
<dbReference type="EC" id="1.1.1.305" evidence="1"/>
<dbReference type="EMBL" id="AF336802">
    <property type="protein sequence ID" value="AAK69642.1"/>
    <property type="molecule type" value="Genomic_DNA"/>
</dbReference>
<dbReference type="EMBL" id="BX936398">
    <property type="protein sequence ID" value="CAH21566.1"/>
    <property type="molecule type" value="Genomic_DNA"/>
</dbReference>
<dbReference type="RefSeq" id="WP_011192542.1">
    <property type="nucleotide sequence ID" value="NC_006155.1"/>
</dbReference>
<dbReference type="SMR" id="Q93PD8"/>
<dbReference type="KEGG" id="ypo:BZ17_126"/>
<dbReference type="KEGG" id="yps:YPTB2328"/>
<dbReference type="PATRIC" id="fig|273123.14.peg.135"/>
<dbReference type="UniPathway" id="UPA00030"/>
<dbReference type="UniPathway" id="UPA00032">
    <property type="reaction ID" value="UER00492"/>
</dbReference>
<dbReference type="UniPathway" id="UPA00032">
    <property type="reaction ID" value="UER00494"/>
</dbReference>
<dbReference type="Proteomes" id="UP000001011">
    <property type="component" value="Chromosome"/>
</dbReference>
<dbReference type="GO" id="GO:0016020">
    <property type="term" value="C:membrane"/>
    <property type="evidence" value="ECO:0007669"/>
    <property type="project" value="GOC"/>
</dbReference>
<dbReference type="GO" id="GO:0016831">
    <property type="term" value="F:carboxy-lyase activity"/>
    <property type="evidence" value="ECO:0007669"/>
    <property type="project" value="InterPro"/>
</dbReference>
<dbReference type="GO" id="GO:0099619">
    <property type="term" value="F:UDP-4-amino-4-deoxy-L-arabinose formyltransferase activity"/>
    <property type="evidence" value="ECO:0007669"/>
    <property type="project" value="UniProtKB-EC"/>
</dbReference>
<dbReference type="GO" id="GO:0099618">
    <property type="term" value="F:UDP-glucuronate dehydrogenase activity"/>
    <property type="evidence" value="ECO:0007669"/>
    <property type="project" value="UniProtKB-EC"/>
</dbReference>
<dbReference type="GO" id="GO:0009245">
    <property type="term" value="P:lipid A biosynthetic process"/>
    <property type="evidence" value="ECO:0007669"/>
    <property type="project" value="UniProtKB-KW"/>
</dbReference>
<dbReference type="GO" id="GO:0009103">
    <property type="term" value="P:lipopolysaccharide biosynthetic process"/>
    <property type="evidence" value="ECO:0007669"/>
    <property type="project" value="UniProtKB-UniRule"/>
</dbReference>
<dbReference type="GO" id="GO:0046677">
    <property type="term" value="P:response to antibiotic"/>
    <property type="evidence" value="ECO:0007669"/>
    <property type="project" value="UniProtKB-KW"/>
</dbReference>
<dbReference type="CDD" id="cd08702">
    <property type="entry name" value="Arna_FMT_C"/>
    <property type="match status" value="1"/>
</dbReference>
<dbReference type="CDD" id="cd05257">
    <property type="entry name" value="Arna_like_SDR_e"/>
    <property type="match status" value="1"/>
</dbReference>
<dbReference type="FunFam" id="3.40.50.720:FF:000197">
    <property type="entry name" value="Bifunctional polymyxin resistance protein ArnA"/>
    <property type="match status" value="1"/>
</dbReference>
<dbReference type="Gene3D" id="3.40.50.12230">
    <property type="match status" value="1"/>
</dbReference>
<dbReference type="Gene3D" id="3.40.50.720">
    <property type="entry name" value="NAD(P)-binding Rossmann-like Domain"/>
    <property type="match status" value="1"/>
</dbReference>
<dbReference type="HAMAP" id="MF_01166">
    <property type="entry name" value="ArnA"/>
    <property type="match status" value="1"/>
</dbReference>
<dbReference type="InterPro" id="IPR045869">
    <property type="entry name" value="Arna-like_SDR_e"/>
</dbReference>
<dbReference type="InterPro" id="IPR021168">
    <property type="entry name" value="Bifun_polymyxin_resist_ArnA"/>
</dbReference>
<dbReference type="InterPro" id="IPR001509">
    <property type="entry name" value="Epimerase_deHydtase"/>
</dbReference>
<dbReference type="InterPro" id="IPR005793">
    <property type="entry name" value="Formyl_trans_C"/>
</dbReference>
<dbReference type="InterPro" id="IPR002376">
    <property type="entry name" value="Formyl_transf_N"/>
</dbReference>
<dbReference type="InterPro" id="IPR036477">
    <property type="entry name" value="Formyl_transf_N_sf"/>
</dbReference>
<dbReference type="InterPro" id="IPR011034">
    <property type="entry name" value="Formyl_transferase-like_C_sf"/>
</dbReference>
<dbReference type="InterPro" id="IPR050177">
    <property type="entry name" value="Lipid_A_modif_metabolic_enz"/>
</dbReference>
<dbReference type="InterPro" id="IPR036291">
    <property type="entry name" value="NAD(P)-bd_dom_sf"/>
</dbReference>
<dbReference type="NCBIfam" id="NF005414">
    <property type="entry name" value="PRK06988.1"/>
    <property type="match status" value="1"/>
</dbReference>
<dbReference type="NCBIfam" id="NF005998">
    <property type="entry name" value="PRK08125.1"/>
    <property type="match status" value="1"/>
</dbReference>
<dbReference type="NCBIfam" id="NF008872">
    <property type="entry name" value="PRK11908.1"/>
    <property type="match status" value="1"/>
</dbReference>
<dbReference type="PANTHER" id="PTHR43245">
    <property type="entry name" value="BIFUNCTIONAL POLYMYXIN RESISTANCE PROTEIN ARNA"/>
    <property type="match status" value="1"/>
</dbReference>
<dbReference type="PANTHER" id="PTHR43245:SF13">
    <property type="entry name" value="UDP-D-APIOSE_UDP-D-XYLOSE SYNTHASE 2"/>
    <property type="match status" value="1"/>
</dbReference>
<dbReference type="Pfam" id="PF01370">
    <property type="entry name" value="Epimerase"/>
    <property type="match status" value="1"/>
</dbReference>
<dbReference type="Pfam" id="PF02911">
    <property type="entry name" value="Formyl_trans_C"/>
    <property type="match status" value="1"/>
</dbReference>
<dbReference type="Pfam" id="PF00551">
    <property type="entry name" value="Formyl_trans_N"/>
    <property type="match status" value="1"/>
</dbReference>
<dbReference type="PIRSF" id="PIRSF036506">
    <property type="entry name" value="Bifun_polymyxin_resist_ArnA"/>
    <property type="match status" value="1"/>
</dbReference>
<dbReference type="SUPFAM" id="SSF50486">
    <property type="entry name" value="FMT C-terminal domain-like"/>
    <property type="match status" value="1"/>
</dbReference>
<dbReference type="SUPFAM" id="SSF53328">
    <property type="entry name" value="Formyltransferase"/>
    <property type="match status" value="1"/>
</dbReference>
<dbReference type="SUPFAM" id="SSF51735">
    <property type="entry name" value="NAD(P)-binding Rossmann-fold domains"/>
    <property type="match status" value="1"/>
</dbReference>
<name>ARNA_YERPS</name>